<proteinExistence type="evidence at transcript level"/>
<feature type="propeptide" id="PRO_0000022121" evidence="1">
    <location>
        <begin position="1" status="less than"/>
        <end position="14"/>
    </location>
</feature>
<feature type="chain" id="PRO_0000022122" description="Vitamin K-dependent protein S">
    <location>
        <begin position="15"/>
        <end position="649"/>
    </location>
</feature>
<feature type="domain" description="Gla" evidence="6">
    <location>
        <begin position="15"/>
        <end position="60"/>
    </location>
</feature>
<feature type="domain" description="EGF-like 1" evidence="4">
    <location>
        <begin position="90"/>
        <end position="128"/>
    </location>
</feature>
<feature type="domain" description="EGF-like 2; calcium-binding" evidence="4">
    <location>
        <begin position="130"/>
        <end position="173"/>
    </location>
</feature>
<feature type="domain" description="EGF-like 3; calcium-binding" evidence="4">
    <location>
        <begin position="174"/>
        <end position="215"/>
    </location>
</feature>
<feature type="domain" description="EGF-like 4; calcium-binding" evidence="4">
    <location>
        <begin position="216"/>
        <end position="256"/>
    </location>
</feature>
<feature type="domain" description="Laminin G-like 1" evidence="5">
    <location>
        <begin position="272"/>
        <end position="448"/>
    </location>
</feature>
<feature type="domain" description="Laminin G-like 2" evidence="5">
    <location>
        <begin position="457"/>
        <end position="639"/>
    </location>
</feature>
<feature type="region of interest" description="Thrombin-sensitive">
    <location>
        <begin position="61"/>
        <end position="89"/>
    </location>
</feature>
<feature type="modified residue" description="4-carboxyglutamate" evidence="2 6">
    <location>
        <position position="20"/>
    </location>
</feature>
<feature type="modified residue" description="4-carboxyglutamate" evidence="2 6">
    <location>
        <position position="21"/>
    </location>
</feature>
<feature type="modified residue" description="4-carboxyglutamate" evidence="2 6">
    <location>
        <position position="28"/>
    </location>
</feature>
<feature type="modified residue" description="4-carboxyglutamate" evidence="2 6">
    <location>
        <position position="30"/>
    </location>
</feature>
<feature type="modified residue" description="4-carboxyglutamate" evidence="2 6">
    <location>
        <position position="33"/>
    </location>
</feature>
<feature type="modified residue" description="4-carboxyglutamate" evidence="2 6">
    <location>
        <position position="34"/>
    </location>
</feature>
<feature type="modified residue" description="4-carboxyglutamate" evidence="2 6">
    <location>
        <position position="39"/>
    </location>
</feature>
<feature type="modified residue" description="4-carboxyglutamate" evidence="2 6">
    <location>
        <position position="40"/>
    </location>
</feature>
<feature type="modified residue" description="4-carboxyglutamate" evidence="2 6">
    <location>
        <position position="43"/>
    </location>
</feature>
<feature type="modified residue" description="4-carboxyglutamate" evidence="2 6">
    <location>
        <position position="46"/>
    </location>
</feature>
<feature type="modified residue" description="4-carboxyglutamate" evidence="2 6">
    <location>
        <position position="50"/>
    </location>
</feature>
<feature type="modified residue" description="(3R)-3-hydroxyaspartate" evidence="1">
    <location>
        <position position="109"/>
    </location>
</feature>
<feature type="glycosylation site" description="N-linked (GlcNAc...) asparagine" evidence="3">
    <location>
        <position position="472"/>
    </location>
</feature>
<feature type="glycosylation site" description="N-linked (GlcNAc...) asparagine" evidence="3">
    <location>
        <position position="482"/>
    </location>
</feature>
<feature type="glycosylation site" description="N-linked (GlcNAc...) asparagine" evidence="3">
    <location>
        <position position="503"/>
    </location>
</feature>
<feature type="disulfide bond" evidence="1">
    <location>
        <begin position="31"/>
        <end position="36"/>
    </location>
</feature>
<feature type="disulfide bond" evidence="1">
    <location>
        <begin position="94"/>
        <end position="107"/>
    </location>
</feature>
<feature type="disulfide bond" evidence="1">
    <location>
        <begin position="99"/>
        <end position="116"/>
    </location>
</feature>
<feature type="disulfide bond" evidence="1">
    <location>
        <begin position="118"/>
        <end position="127"/>
    </location>
</feature>
<feature type="disulfide bond" evidence="1">
    <location>
        <begin position="134"/>
        <end position="148"/>
    </location>
</feature>
<feature type="disulfide bond" evidence="1">
    <location>
        <begin position="144"/>
        <end position="157"/>
    </location>
</feature>
<feature type="disulfide bond" evidence="1">
    <location>
        <begin position="159"/>
        <end position="172"/>
    </location>
</feature>
<feature type="disulfide bond" evidence="1">
    <location>
        <begin position="178"/>
        <end position="190"/>
    </location>
</feature>
<feature type="disulfide bond" evidence="1">
    <location>
        <begin position="185"/>
        <end position="199"/>
    </location>
</feature>
<feature type="disulfide bond" evidence="1">
    <location>
        <begin position="201"/>
        <end position="214"/>
    </location>
</feature>
<feature type="disulfide bond" evidence="1">
    <location>
        <begin position="220"/>
        <end position="229"/>
    </location>
</feature>
<feature type="disulfide bond" evidence="1">
    <location>
        <begin position="225"/>
        <end position="238"/>
    </location>
</feature>
<feature type="disulfide bond" evidence="1">
    <location>
        <begin position="240"/>
        <end position="255"/>
    </location>
</feature>
<feature type="disulfide bond" evidence="1">
    <location>
        <begin position="422"/>
        <end position="448"/>
    </location>
</feature>
<feature type="disulfide bond" evidence="1">
    <location>
        <begin position="612"/>
        <end position="639"/>
    </location>
</feature>
<feature type="non-terminal residue">
    <location>
        <position position="1"/>
    </location>
</feature>
<protein>
    <recommendedName>
        <fullName>Vitamin K-dependent protein S</fullName>
    </recommendedName>
</protein>
<gene>
    <name type="primary">PROS1</name>
    <name type="synonym">PROS</name>
</gene>
<evidence type="ECO:0000250" key="1"/>
<evidence type="ECO:0000250" key="2">
    <source>
        <dbReference type="UniProtKB" id="P07224"/>
    </source>
</evidence>
<evidence type="ECO:0000255" key="3"/>
<evidence type="ECO:0000255" key="4">
    <source>
        <dbReference type="PROSITE-ProRule" id="PRU00076"/>
    </source>
</evidence>
<evidence type="ECO:0000255" key="5">
    <source>
        <dbReference type="PROSITE-ProRule" id="PRU00122"/>
    </source>
</evidence>
<evidence type="ECO:0000255" key="6">
    <source>
        <dbReference type="PROSITE-ProRule" id="PRU00463"/>
    </source>
</evidence>
<evidence type="ECO:0000305" key="7"/>
<comment type="function">
    <text>Anticoagulant plasma protein; it is a cofactor to activated protein C in the degradation of coagulation factors Va and VIIIa. It helps to prevent coagulation and stimulating fibrinolysis.</text>
</comment>
<comment type="subcellular location">
    <subcellularLocation>
        <location>Secreted</location>
    </subcellularLocation>
</comment>
<comment type="tissue specificity">
    <text>Plasma.</text>
</comment>
<comment type="PTM">
    <text evidence="1">The iron and 2-oxoglutarate dependent 3-hydroxylation of aspartate and asparagine is (R) stereospecific within EGF domains.</text>
</comment>
<comment type="sequence caution" evidence="7">
    <conflict type="erroneous initiation">
        <sequence resource="EMBL-CDS" id="AAA70376"/>
    </conflict>
</comment>
<name>PROS_MACMU</name>
<accession>Q28520</accession>
<sequence>SKQQASQVLVRKRRANSMLEETKQGNLERECIEELCNKEEAREVFENDPETDYFYPKYLVCLRSFQSGLFTAARQSTDAYPDLRSCVNAIPDQCSPLPCNEDGYMSCKDGKASFTCTCKPGWQGERCEFDINECKDPSNINGGCSQICDNTPGSYHCSCKSGFVMLSNKKDCKDVDECSLKPNMCGTAVCKNIPGDFECECPEGYRYNLKSKSCEDVDECSENMCAQLCVNYPGGYTCYCDGKKGFKLAQDQKSCEAVSVCLPLNLDTKYELLYLAEQFAGVVLYLKFRLPEISRFSAEFDFRTYDSQGVILYAESIDHSAWLLIALRGGKIEVQLKNEHTSKITTGGDIINNGLWNMVSVEELEHSISIKIAKEAVMDINKPGPLFKPENGLLETKVYFAGFPRKVESELIKPINPRLDGCIRSWNLMKQGASGIKEIIQEKQNKHCLVTVEKGSYYPGSGIAEFHIDYNNGSNAEGWHINVTLNIRPSTGTGVMLALVSSNNTVPFAVSLVDSTSEKSQDIVISVENTVIYRIQALSLCSYQRSHLEFRVNRNNLELLTPLKIETISQEELQTQLAILDKAMKGKVATYLGGLPDVPFSATPVNAFYNGCMEVNINGVELDLDEAISKHNDIRAHSCPSVWKKTKNS</sequence>
<dbReference type="EMBL" id="L31380">
    <property type="protein sequence ID" value="AAA70376.1"/>
    <property type="status" value="ALT_INIT"/>
    <property type="molecule type" value="mRNA"/>
</dbReference>
<dbReference type="PIR" id="S53434">
    <property type="entry name" value="S53434"/>
</dbReference>
<dbReference type="RefSeq" id="NP_001038191.1">
    <property type="nucleotide sequence ID" value="NM_001044726.1"/>
</dbReference>
<dbReference type="SMR" id="Q28520"/>
<dbReference type="STRING" id="9544.ENSMMUP00000026761"/>
<dbReference type="GlyCosmos" id="Q28520">
    <property type="glycosylation" value="3 sites, No reported glycans"/>
</dbReference>
<dbReference type="PaxDb" id="9544-ENSMMUP00000026760"/>
<dbReference type="GeneID" id="694845"/>
<dbReference type="KEGG" id="mcc:694845"/>
<dbReference type="CTD" id="5627"/>
<dbReference type="eggNOG" id="ENOG502QSNF">
    <property type="taxonomic scope" value="Eukaryota"/>
</dbReference>
<dbReference type="InParanoid" id="Q28520"/>
<dbReference type="OrthoDB" id="4062651at2759"/>
<dbReference type="Proteomes" id="UP000006718">
    <property type="component" value="Unassembled WGS sequence"/>
</dbReference>
<dbReference type="GO" id="GO:0005615">
    <property type="term" value="C:extracellular space"/>
    <property type="evidence" value="ECO:0000318"/>
    <property type="project" value="GO_Central"/>
</dbReference>
<dbReference type="GO" id="GO:0005796">
    <property type="term" value="C:Golgi lumen"/>
    <property type="evidence" value="ECO:0007669"/>
    <property type="project" value="UniProtKB-ARBA"/>
</dbReference>
<dbReference type="GO" id="GO:0005509">
    <property type="term" value="F:calcium ion binding"/>
    <property type="evidence" value="ECO:0007669"/>
    <property type="project" value="InterPro"/>
</dbReference>
<dbReference type="GO" id="GO:0007596">
    <property type="term" value="P:blood coagulation"/>
    <property type="evidence" value="ECO:0007669"/>
    <property type="project" value="UniProtKB-KW"/>
</dbReference>
<dbReference type="GO" id="GO:0042730">
    <property type="term" value="P:fibrinolysis"/>
    <property type="evidence" value="ECO:0007669"/>
    <property type="project" value="UniProtKB-KW"/>
</dbReference>
<dbReference type="CDD" id="cd00054">
    <property type="entry name" value="EGF_CA"/>
    <property type="match status" value="3"/>
</dbReference>
<dbReference type="CDD" id="cd00110">
    <property type="entry name" value="LamG"/>
    <property type="match status" value="1"/>
</dbReference>
<dbReference type="FunFam" id="2.10.25.10:FF:000240">
    <property type="entry name" value="Vitamin K-dependent protein S"/>
    <property type="match status" value="1"/>
</dbReference>
<dbReference type="FunFam" id="2.10.25.10:FF:000426">
    <property type="entry name" value="Vitamin K-dependent protein S"/>
    <property type="match status" value="1"/>
</dbReference>
<dbReference type="FunFam" id="2.10.25.10:FF:000584">
    <property type="entry name" value="Vitamin K-dependent protein S"/>
    <property type="match status" value="1"/>
</dbReference>
<dbReference type="FunFam" id="2.60.120.200:FF:000129">
    <property type="entry name" value="Vitamin K-dependent protein S"/>
    <property type="match status" value="1"/>
</dbReference>
<dbReference type="FunFam" id="2.60.120.200:FF:000077">
    <property type="entry name" value="vitamin K-dependent protein S"/>
    <property type="match status" value="1"/>
</dbReference>
<dbReference type="FunFam" id="4.10.740.10:FF:000001">
    <property type="entry name" value="vitamin K-dependent protein S"/>
    <property type="match status" value="1"/>
</dbReference>
<dbReference type="Gene3D" id="2.60.120.200">
    <property type="match status" value="2"/>
</dbReference>
<dbReference type="Gene3D" id="4.10.740.10">
    <property type="entry name" value="Coagulation Factor IX"/>
    <property type="match status" value="1"/>
</dbReference>
<dbReference type="Gene3D" id="2.10.25.10">
    <property type="entry name" value="Laminin"/>
    <property type="match status" value="4"/>
</dbReference>
<dbReference type="InterPro" id="IPR017857">
    <property type="entry name" value="Coagulation_fac-like_Gla_dom"/>
</dbReference>
<dbReference type="InterPro" id="IPR013320">
    <property type="entry name" value="ConA-like_dom_sf"/>
</dbReference>
<dbReference type="InterPro" id="IPR001881">
    <property type="entry name" value="EGF-like_Ca-bd_dom"/>
</dbReference>
<dbReference type="InterPro" id="IPR013032">
    <property type="entry name" value="EGF-like_CS"/>
</dbReference>
<dbReference type="InterPro" id="IPR000742">
    <property type="entry name" value="EGF-like_dom"/>
</dbReference>
<dbReference type="InterPro" id="IPR000152">
    <property type="entry name" value="EGF-type_Asp/Asn_hydroxyl_site"/>
</dbReference>
<dbReference type="InterPro" id="IPR018097">
    <property type="entry name" value="EGF_Ca-bd_CS"/>
</dbReference>
<dbReference type="InterPro" id="IPR051145">
    <property type="entry name" value="GAS-SHBG-PROS"/>
</dbReference>
<dbReference type="InterPro" id="IPR035972">
    <property type="entry name" value="GLA-like_dom_SF"/>
</dbReference>
<dbReference type="InterPro" id="IPR000294">
    <property type="entry name" value="GLA_domain"/>
</dbReference>
<dbReference type="InterPro" id="IPR009030">
    <property type="entry name" value="Growth_fac_rcpt_cys_sf"/>
</dbReference>
<dbReference type="InterPro" id="IPR001791">
    <property type="entry name" value="Laminin_G"/>
</dbReference>
<dbReference type="InterPro" id="IPR049883">
    <property type="entry name" value="NOTCH1_EGF-like"/>
</dbReference>
<dbReference type="PANTHER" id="PTHR24040">
    <property type="entry name" value="LAMININ G-LIKE DOMAIN-CONTAINING PROTEIN"/>
    <property type="match status" value="1"/>
</dbReference>
<dbReference type="PANTHER" id="PTHR24040:SF0">
    <property type="entry name" value="VITAMIN K-DEPENDENT PROTEIN S"/>
    <property type="match status" value="1"/>
</dbReference>
<dbReference type="Pfam" id="PF07645">
    <property type="entry name" value="EGF_CA"/>
    <property type="match status" value="2"/>
</dbReference>
<dbReference type="Pfam" id="PF14670">
    <property type="entry name" value="FXa_inhibition"/>
    <property type="match status" value="1"/>
</dbReference>
<dbReference type="Pfam" id="PF00594">
    <property type="entry name" value="Gla"/>
    <property type="match status" value="1"/>
</dbReference>
<dbReference type="Pfam" id="PF12661">
    <property type="entry name" value="hEGF"/>
    <property type="match status" value="1"/>
</dbReference>
<dbReference type="Pfam" id="PF00054">
    <property type="entry name" value="Laminin_G_1"/>
    <property type="match status" value="1"/>
</dbReference>
<dbReference type="Pfam" id="PF02210">
    <property type="entry name" value="Laminin_G_2"/>
    <property type="match status" value="1"/>
</dbReference>
<dbReference type="PRINTS" id="PR00001">
    <property type="entry name" value="GLABLOOD"/>
</dbReference>
<dbReference type="SMART" id="SM00181">
    <property type="entry name" value="EGF"/>
    <property type="match status" value="4"/>
</dbReference>
<dbReference type="SMART" id="SM00179">
    <property type="entry name" value="EGF_CA"/>
    <property type="match status" value="4"/>
</dbReference>
<dbReference type="SMART" id="SM00069">
    <property type="entry name" value="GLA"/>
    <property type="match status" value="1"/>
</dbReference>
<dbReference type="SMART" id="SM00282">
    <property type="entry name" value="LamG"/>
    <property type="match status" value="2"/>
</dbReference>
<dbReference type="SUPFAM" id="SSF49899">
    <property type="entry name" value="Concanavalin A-like lectins/glucanases"/>
    <property type="match status" value="2"/>
</dbReference>
<dbReference type="SUPFAM" id="SSF57630">
    <property type="entry name" value="GLA-domain"/>
    <property type="match status" value="1"/>
</dbReference>
<dbReference type="SUPFAM" id="SSF57184">
    <property type="entry name" value="Growth factor receptor domain"/>
    <property type="match status" value="1"/>
</dbReference>
<dbReference type="PROSITE" id="PS00010">
    <property type="entry name" value="ASX_HYDROXYL"/>
    <property type="match status" value="4"/>
</dbReference>
<dbReference type="PROSITE" id="PS00022">
    <property type="entry name" value="EGF_1"/>
    <property type="match status" value="1"/>
</dbReference>
<dbReference type="PROSITE" id="PS01186">
    <property type="entry name" value="EGF_2"/>
    <property type="match status" value="3"/>
</dbReference>
<dbReference type="PROSITE" id="PS50026">
    <property type="entry name" value="EGF_3"/>
    <property type="match status" value="4"/>
</dbReference>
<dbReference type="PROSITE" id="PS01187">
    <property type="entry name" value="EGF_CA"/>
    <property type="match status" value="3"/>
</dbReference>
<dbReference type="PROSITE" id="PS00011">
    <property type="entry name" value="GLA_1"/>
    <property type="match status" value="1"/>
</dbReference>
<dbReference type="PROSITE" id="PS50998">
    <property type="entry name" value="GLA_2"/>
    <property type="match status" value="1"/>
</dbReference>
<dbReference type="PROSITE" id="PS50025">
    <property type="entry name" value="LAM_G_DOMAIN"/>
    <property type="match status" value="2"/>
</dbReference>
<organism>
    <name type="scientific">Macaca mulatta</name>
    <name type="common">Rhesus macaque</name>
    <dbReference type="NCBI Taxonomy" id="9544"/>
    <lineage>
        <taxon>Eukaryota</taxon>
        <taxon>Metazoa</taxon>
        <taxon>Chordata</taxon>
        <taxon>Craniata</taxon>
        <taxon>Vertebrata</taxon>
        <taxon>Euteleostomi</taxon>
        <taxon>Mammalia</taxon>
        <taxon>Eutheria</taxon>
        <taxon>Euarchontoglires</taxon>
        <taxon>Primates</taxon>
        <taxon>Haplorrhini</taxon>
        <taxon>Catarrhini</taxon>
        <taxon>Cercopithecidae</taxon>
        <taxon>Cercopithecinae</taxon>
        <taxon>Macaca</taxon>
    </lineage>
</organism>
<keyword id="KW-0094">Blood coagulation</keyword>
<keyword id="KW-0106">Calcium</keyword>
<keyword id="KW-0165">Cleavage on pair of basic residues</keyword>
<keyword id="KW-1015">Disulfide bond</keyword>
<keyword id="KW-0245">EGF-like domain</keyword>
<keyword id="KW-0280">Fibrinolysis</keyword>
<keyword id="KW-0301">Gamma-carboxyglutamic acid</keyword>
<keyword id="KW-0325">Glycoprotein</keyword>
<keyword id="KW-0356">Hemostasis</keyword>
<keyword id="KW-0379">Hydroxylation</keyword>
<keyword id="KW-1185">Reference proteome</keyword>
<keyword id="KW-0677">Repeat</keyword>
<keyword id="KW-0964">Secreted</keyword>
<keyword id="KW-0865">Zymogen</keyword>
<reference key="1">
    <citation type="journal article" date="1995" name="Biochem. J.">
        <title>Identification of candidate residues for interaction of protein S with C4b binding protein and activated protein C.</title>
        <authorList>
            <person name="Greengard J.S."/>
            <person name="Fernandez J.A."/>
            <person name="Radtke K.P."/>
            <person name="Griffin J.H."/>
        </authorList>
    </citation>
    <scope>NUCLEOTIDE SEQUENCE [MRNA]</scope>
    <source>
        <tissue>Liver</tissue>
    </source>
</reference>